<gene>
    <name evidence="1" type="primary">pyrD</name>
    <name type="ordered locus">YPTB1439</name>
</gene>
<comment type="function">
    <text evidence="1">Catalyzes the conversion of dihydroorotate to orotate with quinone as electron acceptor.</text>
</comment>
<comment type="catalytic activity">
    <reaction evidence="1">
        <text>(S)-dihydroorotate + a quinone = orotate + a quinol</text>
        <dbReference type="Rhea" id="RHEA:30187"/>
        <dbReference type="ChEBI" id="CHEBI:24646"/>
        <dbReference type="ChEBI" id="CHEBI:30839"/>
        <dbReference type="ChEBI" id="CHEBI:30864"/>
        <dbReference type="ChEBI" id="CHEBI:132124"/>
        <dbReference type="EC" id="1.3.5.2"/>
    </reaction>
</comment>
<comment type="cofactor">
    <cofactor evidence="1">
        <name>FMN</name>
        <dbReference type="ChEBI" id="CHEBI:58210"/>
    </cofactor>
    <text evidence="1">Binds 1 FMN per subunit.</text>
</comment>
<comment type="pathway">
    <text evidence="1">Pyrimidine metabolism; UMP biosynthesis via de novo pathway; orotate from (S)-dihydroorotate (quinone route): step 1/1.</text>
</comment>
<comment type="subunit">
    <text evidence="1">Monomer.</text>
</comment>
<comment type="subcellular location">
    <subcellularLocation>
        <location evidence="1">Cell membrane</location>
        <topology evidence="1">Peripheral membrane protein</topology>
    </subcellularLocation>
</comment>
<comment type="similarity">
    <text evidence="1">Belongs to the dihydroorotate dehydrogenase family. Type 2 subfamily.</text>
</comment>
<sequence length="336" mass="36832">MYYPLVRKALFQLDPERAHELTFRQLKRVSGTPLEFLVRQSVPTKPVSCMGLSFKNPVGLAAGLDKDGECIDALGAMGFGFIEVGTVTPRPQVGNDKPRLFRIVEAEGLINRMGFNNHGVDNLIENVKKSHFGGILGINIGKNKDTPVEQGKEDYLICMDKIYPYAGYIAINISSPNTPGLRSLQYGEALDDLLAAIKDKQTELHQRHHKYVPVAVKIAPDLTEEELIQIADSLVRHNIDGVIATNTTLDRSLIQGLNYCEQAGGLSGRPLQLRSTEVIHRLSQELKGRLPIIGVGGIDSVTAAREKMAAGASLIQIYSGFIFRGPGLIKNIVTHI</sequence>
<feature type="chain" id="PRO_0000148495" description="Dihydroorotate dehydrogenase (quinone)">
    <location>
        <begin position="1"/>
        <end position="336"/>
    </location>
</feature>
<feature type="active site" description="Nucleophile" evidence="1">
    <location>
        <position position="175"/>
    </location>
</feature>
<feature type="binding site" evidence="1">
    <location>
        <begin position="62"/>
        <end position="66"/>
    </location>
    <ligand>
        <name>FMN</name>
        <dbReference type="ChEBI" id="CHEBI:58210"/>
    </ligand>
</feature>
<feature type="binding site" evidence="1">
    <location>
        <position position="66"/>
    </location>
    <ligand>
        <name>substrate</name>
    </ligand>
</feature>
<feature type="binding site" evidence="1">
    <location>
        <position position="86"/>
    </location>
    <ligand>
        <name>FMN</name>
        <dbReference type="ChEBI" id="CHEBI:58210"/>
    </ligand>
</feature>
<feature type="binding site" evidence="1">
    <location>
        <begin position="111"/>
        <end position="115"/>
    </location>
    <ligand>
        <name>substrate</name>
    </ligand>
</feature>
<feature type="binding site" evidence="1">
    <location>
        <position position="139"/>
    </location>
    <ligand>
        <name>FMN</name>
        <dbReference type="ChEBI" id="CHEBI:58210"/>
    </ligand>
</feature>
<feature type="binding site" evidence="1">
    <location>
        <position position="172"/>
    </location>
    <ligand>
        <name>FMN</name>
        <dbReference type="ChEBI" id="CHEBI:58210"/>
    </ligand>
</feature>
<feature type="binding site" evidence="1">
    <location>
        <position position="172"/>
    </location>
    <ligand>
        <name>substrate</name>
    </ligand>
</feature>
<feature type="binding site" evidence="1">
    <location>
        <position position="177"/>
    </location>
    <ligand>
        <name>substrate</name>
    </ligand>
</feature>
<feature type="binding site" evidence="1">
    <location>
        <position position="217"/>
    </location>
    <ligand>
        <name>FMN</name>
        <dbReference type="ChEBI" id="CHEBI:58210"/>
    </ligand>
</feature>
<feature type="binding site" evidence="1">
    <location>
        <position position="245"/>
    </location>
    <ligand>
        <name>FMN</name>
        <dbReference type="ChEBI" id="CHEBI:58210"/>
    </ligand>
</feature>
<feature type="binding site" evidence="1">
    <location>
        <begin position="246"/>
        <end position="247"/>
    </location>
    <ligand>
        <name>substrate</name>
    </ligand>
</feature>
<feature type="binding site" evidence="1">
    <location>
        <position position="268"/>
    </location>
    <ligand>
        <name>FMN</name>
        <dbReference type="ChEBI" id="CHEBI:58210"/>
    </ligand>
</feature>
<feature type="binding site" evidence="1">
    <location>
        <position position="297"/>
    </location>
    <ligand>
        <name>FMN</name>
        <dbReference type="ChEBI" id="CHEBI:58210"/>
    </ligand>
</feature>
<feature type="binding site" evidence="1">
    <location>
        <begin position="318"/>
        <end position="319"/>
    </location>
    <ligand>
        <name>FMN</name>
        <dbReference type="ChEBI" id="CHEBI:58210"/>
    </ligand>
</feature>
<dbReference type="EC" id="1.3.5.2" evidence="1"/>
<dbReference type="EMBL" id="BX936398">
    <property type="protein sequence ID" value="CAH20679.1"/>
    <property type="molecule type" value="Genomic_DNA"/>
</dbReference>
<dbReference type="RefSeq" id="WP_002211296.1">
    <property type="nucleotide sequence ID" value="NZ_CP009712.1"/>
</dbReference>
<dbReference type="SMR" id="Q66CG4"/>
<dbReference type="GeneID" id="57977211"/>
<dbReference type="KEGG" id="ypo:BZ17_1078"/>
<dbReference type="KEGG" id="yps:YPTB1439"/>
<dbReference type="PATRIC" id="fig|273123.14.peg.1143"/>
<dbReference type="UniPathway" id="UPA00070">
    <property type="reaction ID" value="UER00946"/>
</dbReference>
<dbReference type="Proteomes" id="UP000001011">
    <property type="component" value="Chromosome"/>
</dbReference>
<dbReference type="GO" id="GO:0005737">
    <property type="term" value="C:cytoplasm"/>
    <property type="evidence" value="ECO:0007669"/>
    <property type="project" value="InterPro"/>
</dbReference>
<dbReference type="GO" id="GO:0005886">
    <property type="term" value="C:plasma membrane"/>
    <property type="evidence" value="ECO:0007669"/>
    <property type="project" value="UniProtKB-SubCell"/>
</dbReference>
<dbReference type="GO" id="GO:0106430">
    <property type="term" value="F:dihydroorotate dehydrogenase (quinone) activity"/>
    <property type="evidence" value="ECO:0007669"/>
    <property type="project" value="UniProtKB-EC"/>
</dbReference>
<dbReference type="GO" id="GO:0006207">
    <property type="term" value="P:'de novo' pyrimidine nucleobase biosynthetic process"/>
    <property type="evidence" value="ECO:0007669"/>
    <property type="project" value="InterPro"/>
</dbReference>
<dbReference type="GO" id="GO:0044205">
    <property type="term" value="P:'de novo' UMP biosynthetic process"/>
    <property type="evidence" value="ECO:0007669"/>
    <property type="project" value="UniProtKB-UniRule"/>
</dbReference>
<dbReference type="CDD" id="cd04738">
    <property type="entry name" value="DHOD_2_like"/>
    <property type="match status" value="1"/>
</dbReference>
<dbReference type="FunFam" id="3.20.20.70:FF:000028">
    <property type="entry name" value="Dihydroorotate dehydrogenase (quinone)"/>
    <property type="match status" value="1"/>
</dbReference>
<dbReference type="Gene3D" id="3.20.20.70">
    <property type="entry name" value="Aldolase class I"/>
    <property type="match status" value="1"/>
</dbReference>
<dbReference type="HAMAP" id="MF_00225">
    <property type="entry name" value="DHO_dh_type2"/>
    <property type="match status" value="1"/>
</dbReference>
<dbReference type="InterPro" id="IPR013785">
    <property type="entry name" value="Aldolase_TIM"/>
</dbReference>
<dbReference type="InterPro" id="IPR050074">
    <property type="entry name" value="DHO_dehydrogenase"/>
</dbReference>
<dbReference type="InterPro" id="IPR012135">
    <property type="entry name" value="Dihydroorotate_DH_1_2"/>
</dbReference>
<dbReference type="InterPro" id="IPR005719">
    <property type="entry name" value="Dihydroorotate_DH_2"/>
</dbReference>
<dbReference type="InterPro" id="IPR005720">
    <property type="entry name" value="Dihydroorotate_DH_cat"/>
</dbReference>
<dbReference type="InterPro" id="IPR001295">
    <property type="entry name" value="Dihydroorotate_DH_CS"/>
</dbReference>
<dbReference type="NCBIfam" id="NF003644">
    <property type="entry name" value="PRK05286.1-1"/>
    <property type="match status" value="1"/>
</dbReference>
<dbReference type="NCBIfam" id="NF003645">
    <property type="entry name" value="PRK05286.1-2"/>
    <property type="match status" value="1"/>
</dbReference>
<dbReference type="NCBIfam" id="NF003646">
    <property type="entry name" value="PRK05286.1-4"/>
    <property type="match status" value="1"/>
</dbReference>
<dbReference type="NCBIfam" id="NF003652">
    <property type="entry name" value="PRK05286.2-5"/>
    <property type="match status" value="1"/>
</dbReference>
<dbReference type="NCBIfam" id="TIGR01036">
    <property type="entry name" value="pyrD_sub2"/>
    <property type="match status" value="1"/>
</dbReference>
<dbReference type="PANTHER" id="PTHR48109:SF4">
    <property type="entry name" value="DIHYDROOROTATE DEHYDROGENASE (QUINONE), MITOCHONDRIAL"/>
    <property type="match status" value="1"/>
</dbReference>
<dbReference type="PANTHER" id="PTHR48109">
    <property type="entry name" value="DIHYDROOROTATE DEHYDROGENASE (QUINONE), MITOCHONDRIAL-RELATED"/>
    <property type="match status" value="1"/>
</dbReference>
<dbReference type="Pfam" id="PF01180">
    <property type="entry name" value="DHO_dh"/>
    <property type="match status" value="1"/>
</dbReference>
<dbReference type="PIRSF" id="PIRSF000164">
    <property type="entry name" value="DHO_oxidase"/>
    <property type="match status" value="1"/>
</dbReference>
<dbReference type="SUPFAM" id="SSF51395">
    <property type="entry name" value="FMN-linked oxidoreductases"/>
    <property type="match status" value="1"/>
</dbReference>
<dbReference type="PROSITE" id="PS00911">
    <property type="entry name" value="DHODEHASE_1"/>
    <property type="match status" value="1"/>
</dbReference>
<dbReference type="PROSITE" id="PS00912">
    <property type="entry name" value="DHODEHASE_2"/>
    <property type="match status" value="1"/>
</dbReference>
<proteinExistence type="inferred from homology"/>
<accession>Q66CG4</accession>
<protein>
    <recommendedName>
        <fullName evidence="1">Dihydroorotate dehydrogenase (quinone)</fullName>
        <ecNumber evidence="1">1.3.5.2</ecNumber>
    </recommendedName>
    <alternativeName>
        <fullName evidence="1">DHOdehase</fullName>
        <shortName evidence="1">DHOD</shortName>
        <shortName evidence="1">DHODase</shortName>
    </alternativeName>
    <alternativeName>
        <fullName evidence="1">Dihydroorotate oxidase</fullName>
    </alternativeName>
</protein>
<evidence type="ECO:0000255" key="1">
    <source>
        <dbReference type="HAMAP-Rule" id="MF_00225"/>
    </source>
</evidence>
<organism>
    <name type="scientific">Yersinia pseudotuberculosis serotype I (strain IP32953)</name>
    <dbReference type="NCBI Taxonomy" id="273123"/>
    <lineage>
        <taxon>Bacteria</taxon>
        <taxon>Pseudomonadati</taxon>
        <taxon>Pseudomonadota</taxon>
        <taxon>Gammaproteobacteria</taxon>
        <taxon>Enterobacterales</taxon>
        <taxon>Yersiniaceae</taxon>
        <taxon>Yersinia</taxon>
    </lineage>
</organism>
<name>PYRD_YERPS</name>
<reference key="1">
    <citation type="journal article" date="2004" name="Proc. Natl. Acad. Sci. U.S.A.">
        <title>Insights into the evolution of Yersinia pestis through whole-genome comparison with Yersinia pseudotuberculosis.</title>
        <authorList>
            <person name="Chain P.S.G."/>
            <person name="Carniel E."/>
            <person name="Larimer F.W."/>
            <person name="Lamerdin J."/>
            <person name="Stoutland P.O."/>
            <person name="Regala W.M."/>
            <person name="Georgescu A.M."/>
            <person name="Vergez L.M."/>
            <person name="Land M.L."/>
            <person name="Motin V.L."/>
            <person name="Brubaker R.R."/>
            <person name="Fowler J."/>
            <person name="Hinnebusch J."/>
            <person name="Marceau M."/>
            <person name="Medigue C."/>
            <person name="Simonet M."/>
            <person name="Chenal-Francisque V."/>
            <person name="Souza B."/>
            <person name="Dacheux D."/>
            <person name="Elliott J.M."/>
            <person name="Derbise A."/>
            <person name="Hauser L.J."/>
            <person name="Garcia E."/>
        </authorList>
    </citation>
    <scope>NUCLEOTIDE SEQUENCE [LARGE SCALE GENOMIC DNA]</scope>
    <source>
        <strain>IP32953</strain>
    </source>
</reference>
<keyword id="KW-1003">Cell membrane</keyword>
<keyword id="KW-0285">Flavoprotein</keyword>
<keyword id="KW-0288">FMN</keyword>
<keyword id="KW-0472">Membrane</keyword>
<keyword id="KW-0560">Oxidoreductase</keyword>
<keyword id="KW-0665">Pyrimidine biosynthesis</keyword>